<name>AGLC_METVO</name>
<sequence>MNFISIIIPTFNEEKYITKCLENWFNQDYPKENYEILIFDGKSTDKTLDVIKELQKKHNFENIKIYTNEKRKQVYAFNEGIKNANGDFFIIFGAHAYPEQDFLKNNIETYQRIKKEEPKLAGVGGIINKISENMSAEIAKVIYSTPLSGGSSFWYAKEGFFSNTVVYGMYDTKMIKESEILFDTDFITGQDFEFNLHLIKEGFKLYTNPNIVSSYYTRSSVKKFIKQTISYGAAKGLMIRKGYFNILWLFPFGFLFMLLSIIITGLLIFIYIMAILIDTIRLLIKTREPLYIALPILLFLFHCLISYGFFKGLIKGNSTFK</sequence>
<protein>
    <recommendedName>
        <fullName evidence="5">Dolichyl N-acetyl-alpha-D-glucosaminyl phosphate 3-beta-D-2,3-diacetamido-2,3-dideoxy-beta-D-glucuronosyltransferase</fullName>
        <ecNumber evidence="3">2.4.1.335</ecNumber>
    </recommendedName>
    <alternativeName>
        <fullName evidence="5">Glc-2,3-diNAcA glycosyltransferase</fullName>
    </alternativeName>
    <alternativeName>
        <fullName evidence="5">UDP-Glc-2,3-diNAcA glycosyltransferase</fullName>
    </alternativeName>
</protein>
<dbReference type="EC" id="2.4.1.335" evidence="3"/>
<dbReference type="EMBL" id="EU726231">
    <property type="protein sequence ID" value="ACE74695.1"/>
    <property type="molecule type" value="Genomic_DNA"/>
</dbReference>
<dbReference type="SMR" id="B3VA59"/>
<dbReference type="CAZy" id="GT2">
    <property type="family name" value="Glycosyltransferase Family 2"/>
</dbReference>
<dbReference type="KEGG" id="ag:ACE74695"/>
<dbReference type="OrthoDB" id="46222at2157"/>
<dbReference type="BioCyc" id="MetaCyc:MONOMER-19264"/>
<dbReference type="BRENDA" id="2.4.1.335">
    <property type="organism ID" value="3268"/>
</dbReference>
<dbReference type="UniPathway" id="UPA00378"/>
<dbReference type="UniPathway" id="UPA00977"/>
<dbReference type="GO" id="GO:0005886">
    <property type="term" value="C:plasma membrane"/>
    <property type="evidence" value="ECO:0007669"/>
    <property type="project" value="UniProtKB-SubCell"/>
</dbReference>
<dbReference type="GO" id="GO:0016758">
    <property type="term" value="F:hexosyltransferase activity"/>
    <property type="evidence" value="ECO:0000314"/>
    <property type="project" value="UniProtKB"/>
</dbReference>
<dbReference type="GO" id="GO:0006491">
    <property type="term" value="P:N-glycan processing"/>
    <property type="evidence" value="ECO:0000314"/>
    <property type="project" value="UniProtKB"/>
</dbReference>
<dbReference type="GO" id="GO:0006486">
    <property type="term" value="P:protein glycosylation"/>
    <property type="evidence" value="ECO:0007669"/>
    <property type="project" value="UniProtKB-UniPathway"/>
</dbReference>
<dbReference type="GO" id="GO:0045232">
    <property type="term" value="P:S-layer organization"/>
    <property type="evidence" value="ECO:0007669"/>
    <property type="project" value="UniProtKB-UniPathway"/>
</dbReference>
<dbReference type="FunFam" id="3.90.550.10:FF:000233">
    <property type="entry name" value="Glycosyl transferase, group 2 family protein"/>
    <property type="match status" value="1"/>
</dbReference>
<dbReference type="Gene3D" id="3.90.550.10">
    <property type="entry name" value="Spore Coat Polysaccharide Biosynthesis Protein SpsA, Chain A"/>
    <property type="match status" value="1"/>
</dbReference>
<dbReference type="InterPro" id="IPR001173">
    <property type="entry name" value="Glyco_trans_2-like"/>
</dbReference>
<dbReference type="InterPro" id="IPR029044">
    <property type="entry name" value="Nucleotide-diphossugar_trans"/>
</dbReference>
<dbReference type="PANTHER" id="PTHR22916:SF71">
    <property type="entry name" value="GLYCOSYL TRANSFERASE"/>
    <property type="match status" value="1"/>
</dbReference>
<dbReference type="PANTHER" id="PTHR22916">
    <property type="entry name" value="GLYCOSYLTRANSFERASE"/>
    <property type="match status" value="1"/>
</dbReference>
<dbReference type="Pfam" id="PF00535">
    <property type="entry name" value="Glycos_transf_2"/>
    <property type="match status" value="1"/>
</dbReference>
<dbReference type="SUPFAM" id="SSF53448">
    <property type="entry name" value="Nucleotide-diphospho-sugar transferases"/>
    <property type="match status" value="1"/>
</dbReference>
<reference key="1">
    <citation type="journal article" date="2009" name="J. Bacteriol.">
        <title>AglC and AglK are involved in biosynthesis and attachment of diacetylated glucuronic acid to the N-glycan in Methanococcus voltae.</title>
        <authorList>
            <person name="Chaban B."/>
            <person name="Logan S.M."/>
            <person name="Kelly J.F."/>
            <person name="Jarrell K.F."/>
        </authorList>
    </citation>
    <scope>NUCLEOTIDE SEQUENCE [GENOMIC DNA]</scope>
    <scope>FUNCTION</scope>
    <scope>DISRUPTION PHENOTYPE</scope>
    <source>
        <strain>ATCC 33273 / DSM 1537 / NBRC 100457 / OCM 70 / PS</strain>
    </source>
</reference>
<reference key="2">
    <citation type="journal article" date="2013" name="Nat. Chem. Biol.">
        <title>Biochemical evidence for an alternate pathway in N-linked glycoprotein biosynthesis.</title>
        <authorList>
            <person name="Larkin A."/>
            <person name="Chang M.M."/>
            <person name="Whitworth G.E."/>
            <person name="Imperiali B."/>
        </authorList>
    </citation>
    <scope>FUNCTION</scope>
    <scope>CATALYTIC ACTIVITY</scope>
    <scope>SUBSTRATE SPECIFICITY</scope>
    <source>
        <strain>ATCC 33273 / DSM 1537 / NBRC 100457 / OCM 70 / PS</strain>
    </source>
</reference>
<gene>
    <name evidence="4" type="primary">aglC</name>
</gene>
<comment type="function">
    <text evidence="2 3">Involved in the assembly of an N-linked disaccharide that decorates the S-layer glycoprotein and flagellins (PubMed:18978056). AglC catalyzes the transfer of 2,3-diacetamido-2,3-dideoxy-alpha-D-glucuronic acid (Glc-2,3-diNAcA) from uridine 5'-diphospho 2,3-diacetamido-2,3-dideoxy-alpha-D-glucuronic acid (UDP-Glc-2,3-diNAcA) to the AglK product Dol-P-GlcNAc to yield Dol-P-GlcNAc-Glc-2,3-diNAcA (PubMed:23624439). AglC is specific for the monophosphate-linked Dol-P-GlcNAc (PubMed:23624439).</text>
</comment>
<comment type="catalytic activity">
    <reaction evidence="3">
        <text>an archaeal dolichyl N-acetyl-alpha-D-glucosaminyl phosphate + UDP-2,3-diacetamido-2,3-dideoxy-alpha-D-glucuronate = an archaeal dolichyl 3-O-(2,3-diacetamido-2,3-dideoxy- beta-D-glucuronosyl)-N-acetyl- alpha-D-glucosaminyl phosphate + UDP + H(+)</text>
        <dbReference type="Rhea" id="RHEA:47596"/>
        <dbReference type="Rhea" id="RHEA-COMP:11931"/>
        <dbReference type="Rhea" id="RHEA-COMP:12047"/>
        <dbReference type="ChEBI" id="CHEBI:15378"/>
        <dbReference type="ChEBI" id="CHEBI:58223"/>
        <dbReference type="ChEBI" id="CHEBI:58745"/>
        <dbReference type="ChEBI" id="CHEBI:88021"/>
        <dbReference type="ChEBI" id="CHEBI:88026"/>
        <dbReference type="EC" id="2.4.1.335"/>
    </reaction>
</comment>
<comment type="pathway">
    <text evidence="7">Cell surface structure biogenesis; S-layer biogenesis.</text>
</comment>
<comment type="pathway">
    <text evidence="7">Protein modification; protein glycosylation.</text>
</comment>
<comment type="subcellular location">
    <subcellularLocation>
        <location evidence="8">Cell membrane</location>
        <topology evidence="8">Multi-pass membrane protein</topology>
    </subcellularLocation>
</comment>
<comment type="disruption phenotype">
    <text evidence="2">Cells lacking this gene result in flagellins and S-layer proteins with significantly reduced apparent molecular masses, loss of flagellar assembly and absence of glycan attachment.</text>
</comment>
<comment type="similarity">
    <text evidence="6">Belongs to the glycosyltransferase 2 family.</text>
</comment>
<keyword id="KW-1003">Cell membrane</keyword>
<keyword id="KW-0328">Glycosyltransferase</keyword>
<keyword id="KW-0472">Membrane</keyword>
<keyword id="KW-0808">Transferase</keyword>
<keyword id="KW-0812">Transmembrane</keyword>
<keyword id="KW-1133">Transmembrane helix</keyword>
<accession>B3VA59</accession>
<evidence type="ECO:0000255" key="1"/>
<evidence type="ECO:0000269" key="2">
    <source>
    </source>
</evidence>
<evidence type="ECO:0000269" key="3">
    <source>
    </source>
</evidence>
<evidence type="ECO:0000303" key="4">
    <source>
    </source>
</evidence>
<evidence type="ECO:0000303" key="5">
    <source>
    </source>
</evidence>
<evidence type="ECO:0000305" key="6"/>
<evidence type="ECO:0000305" key="7">
    <source>
    </source>
</evidence>
<evidence type="ECO:0000305" key="8">
    <source>
    </source>
</evidence>
<proteinExistence type="evidence at protein level"/>
<organism>
    <name type="scientific">Methanococcus voltae</name>
    <dbReference type="NCBI Taxonomy" id="2188"/>
    <lineage>
        <taxon>Archaea</taxon>
        <taxon>Methanobacteriati</taxon>
        <taxon>Methanobacteriota</taxon>
        <taxon>Methanomada group</taxon>
        <taxon>Methanococci</taxon>
        <taxon>Methanococcales</taxon>
        <taxon>Methanococcaceae</taxon>
        <taxon>Methanococcus</taxon>
    </lineage>
</organism>
<feature type="chain" id="PRO_0000435654" description="Dolichyl N-acetyl-alpha-D-glucosaminyl phosphate 3-beta-D-2,3-diacetamido-2,3-dideoxy-beta-D-glucuronosyltransferase">
    <location>
        <begin position="1"/>
        <end position="321"/>
    </location>
</feature>
<feature type="transmembrane region" description="Helical" evidence="1">
    <location>
        <begin position="252"/>
        <end position="272"/>
    </location>
</feature>
<feature type="transmembrane region" description="Helical" evidence="1">
    <location>
        <begin position="290"/>
        <end position="310"/>
    </location>
</feature>